<evidence type="ECO:0000255" key="1">
    <source>
        <dbReference type="HAMAP-Rule" id="MF_01346"/>
    </source>
</evidence>
<evidence type="ECO:0000256" key="2">
    <source>
        <dbReference type="SAM" id="MobiDB-lite"/>
    </source>
</evidence>
<keyword id="KW-0066">ATP synthesis</keyword>
<keyword id="KW-0067">ATP-binding</keyword>
<keyword id="KW-1003">Cell membrane</keyword>
<keyword id="KW-0139">CF(1)</keyword>
<keyword id="KW-0375">Hydrogen ion transport</keyword>
<keyword id="KW-0406">Ion transport</keyword>
<keyword id="KW-0472">Membrane</keyword>
<keyword id="KW-0547">Nucleotide-binding</keyword>
<keyword id="KW-1278">Translocase</keyword>
<keyword id="KW-0813">Transport</keyword>
<accession>B9IRT9</accession>
<sequence>MSIRAEEISALIKQQIENYQSEIEVSDVGTVIQVGDGIARAHGLDNVMAGELVEFSNGVMGLAQNLEENNVGIIILGPYTEIREGDEVRRTGRIMQVPVGKELIGRVVNPLGQPVDGLGPINTTNTRPIESPAPGVMDRKSVHEPLQTGIKAIDALVPIGRGQRELIIGDRQTGKTAVALDTIINQKDEDMICIYVAIGQKESTVRNVVETLRKHGALEYTIVVTASASQPAPLLYLAPYAGVTMGEEFMYNGKHVLVVYDDLSKQAAAYRELSLLLRRPPGREAYPGDVFYLHSRLLERAAKLSDAKGGGSLTALPFIETQAGDVSAYIPTNVISITDGQIFLQSDLFFSGVRPAIDAGTSVSRVGGSAQIKAMSKVSGTLRLDLASYRELEAFAQFGSDLDKATQAKLNRGARTVEVLKQGLHKPLRVEKQVIILYALTRGFLDDIPVVDITRFEEEFHAWLDSNATDLLEEIRTTKKLADDDKFAAAINGFKKVFVASE</sequence>
<name>ATPA_BACCQ</name>
<gene>
    <name evidence="1" type="primary">atpA</name>
    <name type="ordered locus">BCQ_5147</name>
</gene>
<proteinExistence type="inferred from homology"/>
<reference key="1">
    <citation type="journal article" date="2009" name="J. Bacteriol.">
        <title>Complete genome sequence of the extremophilic Bacillus cereus strain Q1 with industrial applications.</title>
        <authorList>
            <person name="Xiong Z."/>
            <person name="Jiang Y."/>
            <person name="Qi D."/>
            <person name="Lu H."/>
            <person name="Yang F."/>
            <person name="Yang J."/>
            <person name="Chen L."/>
            <person name="Sun L."/>
            <person name="Xu X."/>
            <person name="Xue Y."/>
            <person name="Zhu Y."/>
            <person name="Jin Q."/>
        </authorList>
    </citation>
    <scope>NUCLEOTIDE SEQUENCE [LARGE SCALE GENOMIC DNA]</scope>
    <source>
        <strain>Q1</strain>
    </source>
</reference>
<organism>
    <name type="scientific">Bacillus cereus (strain Q1)</name>
    <dbReference type="NCBI Taxonomy" id="361100"/>
    <lineage>
        <taxon>Bacteria</taxon>
        <taxon>Bacillati</taxon>
        <taxon>Bacillota</taxon>
        <taxon>Bacilli</taxon>
        <taxon>Bacillales</taxon>
        <taxon>Bacillaceae</taxon>
        <taxon>Bacillus</taxon>
        <taxon>Bacillus cereus group</taxon>
    </lineage>
</organism>
<protein>
    <recommendedName>
        <fullName evidence="1">ATP synthase subunit alpha</fullName>
        <ecNumber evidence="1">7.1.2.2</ecNumber>
    </recommendedName>
    <alternativeName>
        <fullName evidence="1">ATP synthase F1 sector subunit alpha</fullName>
    </alternativeName>
    <alternativeName>
        <fullName evidence="1">F-ATPase subunit alpha</fullName>
    </alternativeName>
</protein>
<comment type="function">
    <text evidence="1">Produces ATP from ADP in the presence of a proton gradient across the membrane. The alpha chain is a regulatory subunit.</text>
</comment>
<comment type="catalytic activity">
    <reaction evidence="1">
        <text>ATP + H2O + 4 H(+)(in) = ADP + phosphate + 5 H(+)(out)</text>
        <dbReference type="Rhea" id="RHEA:57720"/>
        <dbReference type="ChEBI" id="CHEBI:15377"/>
        <dbReference type="ChEBI" id="CHEBI:15378"/>
        <dbReference type="ChEBI" id="CHEBI:30616"/>
        <dbReference type="ChEBI" id="CHEBI:43474"/>
        <dbReference type="ChEBI" id="CHEBI:456216"/>
        <dbReference type="EC" id="7.1.2.2"/>
    </reaction>
</comment>
<comment type="subunit">
    <text evidence="1">F-type ATPases have 2 components, CF(1) - the catalytic core - and CF(0) - the membrane proton channel. CF(1) has five subunits: alpha(3), beta(3), gamma(1), delta(1), epsilon(1). CF(0) has three main subunits: a(1), b(2) and c(9-12). The alpha and beta chains form an alternating ring which encloses part of the gamma chain. CF(1) is attached to CF(0) by a central stalk formed by the gamma and epsilon chains, while a peripheral stalk is formed by the delta and b chains.</text>
</comment>
<comment type="subcellular location">
    <subcellularLocation>
        <location evidence="1">Cell membrane</location>
        <topology evidence="1">Peripheral membrane protein</topology>
    </subcellularLocation>
</comment>
<comment type="similarity">
    <text evidence="1">Belongs to the ATPase alpha/beta chains family.</text>
</comment>
<feature type="chain" id="PRO_1000166519" description="ATP synthase subunit alpha">
    <location>
        <begin position="1"/>
        <end position="502"/>
    </location>
</feature>
<feature type="region of interest" description="Disordered" evidence="2">
    <location>
        <begin position="115"/>
        <end position="135"/>
    </location>
</feature>
<feature type="binding site" evidence="1">
    <location>
        <begin position="169"/>
        <end position="176"/>
    </location>
    <ligand>
        <name>ATP</name>
        <dbReference type="ChEBI" id="CHEBI:30616"/>
    </ligand>
</feature>
<feature type="site" description="Required for activity" evidence="1">
    <location>
        <position position="362"/>
    </location>
</feature>
<dbReference type="EC" id="7.1.2.2" evidence="1"/>
<dbReference type="EMBL" id="CP000227">
    <property type="protein sequence ID" value="ACM15547.1"/>
    <property type="molecule type" value="Genomic_DNA"/>
</dbReference>
<dbReference type="SMR" id="B9IRT9"/>
<dbReference type="KEGG" id="bcq:BCQ_5147"/>
<dbReference type="HOGENOM" id="CLU_010091_2_1_9"/>
<dbReference type="Proteomes" id="UP000000441">
    <property type="component" value="Chromosome"/>
</dbReference>
<dbReference type="GO" id="GO:0005886">
    <property type="term" value="C:plasma membrane"/>
    <property type="evidence" value="ECO:0007669"/>
    <property type="project" value="UniProtKB-SubCell"/>
</dbReference>
<dbReference type="GO" id="GO:0045259">
    <property type="term" value="C:proton-transporting ATP synthase complex"/>
    <property type="evidence" value="ECO:0007669"/>
    <property type="project" value="UniProtKB-KW"/>
</dbReference>
<dbReference type="GO" id="GO:0043531">
    <property type="term" value="F:ADP binding"/>
    <property type="evidence" value="ECO:0007669"/>
    <property type="project" value="TreeGrafter"/>
</dbReference>
<dbReference type="GO" id="GO:0005524">
    <property type="term" value="F:ATP binding"/>
    <property type="evidence" value="ECO:0007669"/>
    <property type="project" value="UniProtKB-UniRule"/>
</dbReference>
<dbReference type="GO" id="GO:0046933">
    <property type="term" value="F:proton-transporting ATP synthase activity, rotational mechanism"/>
    <property type="evidence" value="ECO:0007669"/>
    <property type="project" value="UniProtKB-UniRule"/>
</dbReference>
<dbReference type="CDD" id="cd18113">
    <property type="entry name" value="ATP-synt_F1_alpha_C"/>
    <property type="match status" value="1"/>
</dbReference>
<dbReference type="CDD" id="cd18116">
    <property type="entry name" value="ATP-synt_F1_alpha_N"/>
    <property type="match status" value="1"/>
</dbReference>
<dbReference type="CDD" id="cd01132">
    <property type="entry name" value="F1-ATPase_alpha_CD"/>
    <property type="match status" value="1"/>
</dbReference>
<dbReference type="FunFam" id="1.20.150.20:FF:000001">
    <property type="entry name" value="ATP synthase subunit alpha"/>
    <property type="match status" value="1"/>
</dbReference>
<dbReference type="FunFam" id="2.40.30.20:FF:000001">
    <property type="entry name" value="ATP synthase subunit alpha"/>
    <property type="match status" value="1"/>
</dbReference>
<dbReference type="FunFam" id="3.40.50.300:FF:000002">
    <property type="entry name" value="ATP synthase subunit alpha"/>
    <property type="match status" value="1"/>
</dbReference>
<dbReference type="Gene3D" id="2.40.30.20">
    <property type="match status" value="1"/>
</dbReference>
<dbReference type="Gene3D" id="1.20.150.20">
    <property type="entry name" value="ATP synthase alpha/beta chain, C-terminal domain"/>
    <property type="match status" value="1"/>
</dbReference>
<dbReference type="Gene3D" id="3.40.50.300">
    <property type="entry name" value="P-loop containing nucleotide triphosphate hydrolases"/>
    <property type="match status" value="1"/>
</dbReference>
<dbReference type="HAMAP" id="MF_01346">
    <property type="entry name" value="ATP_synth_alpha_bact"/>
    <property type="match status" value="1"/>
</dbReference>
<dbReference type="InterPro" id="IPR023366">
    <property type="entry name" value="ATP_synth_asu-like_sf"/>
</dbReference>
<dbReference type="InterPro" id="IPR000793">
    <property type="entry name" value="ATP_synth_asu_C"/>
</dbReference>
<dbReference type="InterPro" id="IPR038376">
    <property type="entry name" value="ATP_synth_asu_C_sf"/>
</dbReference>
<dbReference type="InterPro" id="IPR033732">
    <property type="entry name" value="ATP_synth_F1_a_nt-bd_dom"/>
</dbReference>
<dbReference type="InterPro" id="IPR005294">
    <property type="entry name" value="ATP_synth_F1_asu"/>
</dbReference>
<dbReference type="InterPro" id="IPR020003">
    <property type="entry name" value="ATPase_a/bsu_AS"/>
</dbReference>
<dbReference type="InterPro" id="IPR004100">
    <property type="entry name" value="ATPase_F1/V1/A1_a/bsu_N"/>
</dbReference>
<dbReference type="InterPro" id="IPR036121">
    <property type="entry name" value="ATPase_F1/V1/A1_a/bsu_N_sf"/>
</dbReference>
<dbReference type="InterPro" id="IPR000194">
    <property type="entry name" value="ATPase_F1/V1/A1_a/bsu_nucl-bd"/>
</dbReference>
<dbReference type="InterPro" id="IPR027417">
    <property type="entry name" value="P-loop_NTPase"/>
</dbReference>
<dbReference type="NCBIfam" id="TIGR00962">
    <property type="entry name" value="atpA"/>
    <property type="match status" value="1"/>
</dbReference>
<dbReference type="NCBIfam" id="NF009884">
    <property type="entry name" value="PRK13343.1"/>
    <property type="match status" value="1"/>
</dbReference>
<dbReference type="PANTHER" id="PTHR48082">
    <property type="entry name" value="ATP SYNTHASE SUBUNIT ALPHA, MITOCHONDRIAL"/>
    <property type="match status" value="1"/>
</dbReference>
<dbReference type="PANTHER" id="PTHR48082:SF2">
    <property type="entry name" value="ATP SYNTHASE SUBUNIT ALPHA, MITOCHONDRIAL"/>
    <property type="match status" value="1"/>
</dbReference>
<dbReference type="Pfam" id="PF00006">
    <property type="entry name" value="ATP-synt_ab"/>
    <property type="match status" value="1"/>
</dbReference>
<dbReference type="Pfam" id="PF00306">
    <property type="entry name" value="ATP-synt_ab_C"/>
    <property type="match status" value="1"/>
</dbReference>
<dbReference type="Pfam" id="PF02874">
    <property type="entry name" value="ATP-synt_ab_N"/>
    <property type="match status" value="1"/>
</dbReference>
<dbReference type="PIRSF" id="PIRSF039088">
    <property type="entry name" value="F_ATPase_subunit_alpha"/>
    <property type="match status" value="1"/>
</dbReference>
<dbReference type="SUPFAM" id="SSF47917">
    <property type="entry name" value="C-terminal domain of alpha and beta subunits of F1 ATP synthase"/>
    <property type="match status" value="1"/>
</dbReference>
<dbReference type="SUPFAM" id="SSF50615">
    <property type="entry name" value="N-terminal domain of alpha and beta subunits of F1 ATP synthase"/>
    <property type="match status" value="1"/>
</dbReference>
<dbReference type="SUPFAM" id="SSF52540">
    <property type="entry name" value="P-loop containing nucleoside triphosphate hydrolases"/>
    <property type="match status" value="1"/>
</dbReference>
<dbReference type="PROSITE" id="PS00152">
    <property type="entry name" value="ATPASE_ALPHA_BETA"/>
    <property type="match status" value="1"/>
</dbReference>